<proteinExistence type="evidence at protein level"/>
<dbReference type="EC" id="5.4.2.2"/>
<dbReference type="EMBL" id="AF033856">
    <property type="protein sequence ID" value="AAD03475.1"/>
    <property type="molecule type" value="Genomic_DNA"/>
</dbReference>
<dbReference type="SMR" id="P39671"/>
<dbReference type="eggNOG" id="COG0033">
    <property type="taxonomic scope" value="Bacteria"/>
</dbReference>
<dbReference type="GO" id="GO:0005829">
    <property type="term" value="C:cytosol"/>
    <property type="evidence" value="ECO:0007669"/>
    <property type="project" value="TreeGrafter"/>
</dbReference>
<dbReference type="GO" id="GO:0000287">
    <property type="term" value="F:magnesium ion binding"/>
    <property type="evidence" value="ECO:0007669"/>
    <property type="project" value="InterPro"/>
</dbReference>
<dbReference type="GO" id="GO:0004614">
    <property type="term" value="F:phosphoglucomutase activity"/>
    <property type="evidence" value="ECO:0007669"/>
    <property type="project" value="UniProtKB-EC"/>
</dbReference>
<dbReference type="GO" id="GO:0006006">
    <property type="term" value="P:glucose metabolic process"/>
    <property type="evidence" value="ECO:0007669"/>
    <property type="project" value="UniProtKB-KW"/>
</dbReference>
<dbReference type="CDD" id="cd03085">
    <property type="entry name" value="PGM1"/>
    <property type="match status" value="1"/>
</dbReference>
<dbReference type="FunFam" id="3.30.310.50:FF:000002">
    <property type="entry name" value="Phosphoglucomutase 5"/>
    <property type="match status" value="1"/>
</dbReference>
<dbReference type="FunFam" id="3.40.120.10:FF:000004">
    <property type="entry name" value="Phosphoglucomutase 5"/>
    <property type="match status" value="1"/>
</dbReference>
<dbReference type="FunFam" id="3.40.120.10:FF:000005">
    <property type="entry name" value="Phosphoglucomutase 5"/>
    <property type="match status" value="1"/>
</dbReference>
<dbReference type="FunFam" id="3.40.120.10:FF:000006">
    <property type="entry name" value="Phosphoglucomutase PgmA"/>
    <property type="match status" value="1"/>
</dbReference>
<dbReference type="Gene3D" id="3.40.120.10">
    <property type="entry name" value="Alpha-D-Glucose-1,6-Bisphosphate, subunit A, domain 3"/>
    <property type="match status" value="3"/>
</dbReference>
<dbReference type="Gene3D" id="3.30.310.50">
    <property type="entry name" value="Alpha-D-phosphohexomutase, C-terminal domain"/>
    <property type="match status" value="1"/>
</dbReference>
<dbReference type="InterPro" id="IPR005844">
    <property type="entry name" value="A-D-PHexomutase_a/b/a-I"/>
</dbReference>
<dbReference type="InterPro" id="IPR016055">
    <property type="entry name" value="A-D-PHexomutase_a/b/a-I/II/III"/>
</dbReference>
<dbReference type="InterPro" id="IPR005845">
    <property type="entry name" value="A-D-PHexomutase_a/b/a-II"/>
</dbReference>
<dbReference type="InterPro" id="IPR005846">
    <property type="entry name" value="A-D-PHexomutase_a/b/a-III"/>
</dbReference>
<dbReference type="InterPro" id="IPR036900">
    <property type="entry name" value="A-D-PHexomutase_C_sf"/>
</dbReference>
<dbReference type="InterPro" id="IPR016066">
    <property type="entry name" value="A-D-PHexomutase_CS"/>
</dbReference>
<dbReference type="InterPro" id="IPR005841">
    <property type="entry name" value="Alpha-D-phosphohexomutase_SF"/>
</dbReference>
<dbReference type="InterPro" id="IPR045244">
    <property type="entry name" value="PGM"/>
</dbReference>
<dbReference type="NCBIfam" id="NF005737">
    <property type="entry name" value="PRK07564.1-1"/>
    <property type="match status" value="1"/>
</dbReference>
<dbReference type="PANTHER" id="PTHR22573:SF2">
    <property type="entry name" value="PHOSPHOGLUCOMUTASE"/>
    <property type="match status" value="1"/>
</dbReference>
<dbReference type="PANTHER" id="PTHR22573">
    <property type="entry name" value="PHOSPHOHEXOMUTASE FAMILY MEMBER"/>
    <property type="match status" value="1"/>
</dbReference>
<dbReference type="Pfam" id="PF24947">
    <property type="entry name" value="PGM1_C_vert_fung"/>
    <property type="match status" value="1"/>
</dbReference>
<dbReference type="Pfam" id="PF02878">
    <property type="entry name" value="PGM_PMM_I"/>
    <property type="match status" value="1"/>
</dbReference>
<dbReference type="Pfam" id="PF02879">
    <property type="entry name" value="PGM_PMM_II"/>
    <property type="match status" value="1"/>
</dbReference>
<dbReference type="Pfam" id="PF02880">
    <property type="entry name" value="PGM_PMM_III"/>
    <property type="match status" value="1"/>
</dbReference>
<dbReference type="PRINTS" id="PR00509">
    <property type="entry name" value="PGMPMM"/>
</dbReference>
<dbReference type="SUPFAM" id="SSF55957">
    <property type="entry name" value="Phosphoglucomutase, C-terminal domain"/>
    <property type="match status" value="1"/>
</dbReference>
<dbReference type="SUPFAM" id="SSF53738">
    <property type="entry name" value="Phosphoglucomutase, first 3 domains"/>
    <property type="match status" value="3"/>
</dbReference>
<dbReference type="PROSITE" id="PS00710">
    <property type="entry name" value="PGM_PMM"/>
    <property type="match status" value="1"/>
</dbReference>
<keyword id="KW-0119">Carbohydrate metabolism</keyword>
<keyword id="KW-0313">Glucose metabolism</keyword>
<keyword id="KW-0413">Isomerase</keyword>
<keyword id="KW-0460">Magnesium</keyword>
<keyword id="KW-0479">Metal-binding</keyword>
<keyword id="KW-0597">Phosphoprotein</keyword>
<evidence type="ECO:0000250" key="1"/>
<evidence type="ECO:0000250" key="2">
    <source>
        <dbReference type="UniProtKB" id="P00949"/>
    </source>
</evidence>
<evidence type="ECO:0000305" key="3"/>
<protein>
    <recommendedName>
        <fullName>Phosphoglucomutase</fullName>
        <shortName>PGM</shortName>
        <ecNumber>5.4.2.2</ecNumber>
    </recommendedName>
    <alternativeName>
        <fullName>Glucose phosphomutase</fullName>
    </alternativeName>
</protein>
<feature type="chain" id="PRO_0000147808" description="Phosphoglucomutase">
    <location>
        <begin position="1"/>
        <end position="542"/>
    </location>
</feature>
<feature type="active site" description="Phosphoserine intermediate" evidence="2">
    <location>
        <position position="112"/>
    </location>
</feature>
<feature type="binding site" evidence="2">
    <location>
        <position position="17"/>
    </location>
    <ligand>
        <name>substrate</name>
    </ligand>
</feature>
<feature type="binding site" evidence="2">
    <location>
        <position position="21"/>
    </location>
    <ligand>
        <name>substrate</name>
    </ligand>
</feature>
<feature type="binding site" evidence="2">
    <location>
        <begin position="112"/>
        <end position="113"/>
    </location>
    <ligand>
        <name>substrate</name>
    </ligand>
</feature>
<feature type="binding site" description="via phosphate group" evidence="2">
    <location>
        <position position="112"/>
    </location>
    <ligand>
        <name>Mg(2+)</name>
        <dbReference type="ChEBI" id="CHEBI:18420"/>
    </ligand>
</feature>
<feature type="binding site" evidence="2">
    <location>
        <position position="125"/>
    </location>
    <ligand>
        <name>substrate</name>
    </ligand>
</feature>
<feature type="binding site" evidence="2">
    <location>
        <position position="276"/>
    </location>
    <ligand>
        <name>Mg(2+)</name>
        <dbReference type="ChEBI" id="CHEBI:18420"/>
    </ligand>
</feature>
<feature type="binding site" evidence="2">
    <location>
        <position position="278"/>
    </location>
    <ligand>
        <name>Mg(2+)</name>
        <dbReference type="ChEBI" id="CHEBI:18420"/>
    </ligand>
</feature>
<feature type="binding site" evidence="2">
    <location>
        <begin position="280"/>
        <end position="281"/>
    </location>
    <ligand>
        <name>substrate</name>
    </ligand>
</feature>
<feature type="binding site" evidence="2">
    <location>
        <position position="280"/>
    </location>
    <ligand>
        <name>Mg(2+)</name>
        <dbReference type="ChEBI" id="CHEBI:18420"/>
    </ligand>
</feature>
<feature type="binding site" evidence="2">
    <location>
        <position position="343"/>
    </location>
    <ligand>
        <name>substrate</name>
    </ligand>
</feature>
<feature type="binding site" evidence="2">
    <location>
        <begin position="362"/>
        <end position="364"/>
    </location>
    <ligand>
        <name>substrate</name>
    </ligand>
</feature>
<feature type="binding site" evidence="2">
    <location>
        <position position="375"/>
    </location>
    <ligand>
        <name>substrate</name>
    </ligand>
</feature>
<feature type="binding site" evidence="2">
    <location>
        <position position="495"/>
    </location>
    <ligand>
        <name>substrate</name>
    </ligand>
</feature>
<sequence>MIKTIKTTPYQDQKPGTSGLRKKVPVFAQENYAENFIQSIFDALEGFEGQTLVIGGDGRYYNREVIQKAIKMAAAAGFGKVLVGQGGILSTPAASNVIRKYKAFGGIVLSASHNPGGPTEDFGIKYNIGNGGPAPEKITDAIYARSKVIDSYKISDAADIDLDKIGSFKVDELTVDVIDPVADYAALMEELFDFGAIRSLIAGGFKVVVDSMSAVTGPYAVEILEKRLGAPKGSVRNATPLPDFGGHHPDPNLVHAKELYDDVMSPEGPDFGAASDGDGDRNMVVGKGMFVTPSDSLAIIAANAKLAPGYAAGISGIARSMPTSAAADRVAEKLGLGMYETPTGWKFFGNLMDAGKVTICGEESFGTGSNHVREKDGLWAVLYWLNIVAARKESVKDIVTKHWAEYGRNYYSRHDYEEVDSDAANTLVAILREKLATLPGTSYGNLKVAAADDFAYHDPVDQSVSKNQGIRILFEGGSRIVLRLSGTGTAGATLRLYVERYEPDAARHGIETQSALADLISVADTIAGIKAHTADSEPTVIT</sequence>
<reference key="1">
    <citation type="journal article" date="1994" name="Gene">
        <title>A chromosomal cluster of genes encoding ADP-glucose synthetase, glycogen synthase and phosphoglucomutase in Agrobacterium tumefaciens.</title>
        <authorList>
            <person name="Uttaro A.D."/>
            <person name="Ugalde R.A."/>
        </authorList>
    </citation>
    <scope>NUCLEOTIDE SEQUENCE [GENOMIC DNA]</scope>
    <source>
        <strain>A348</strain>
    </source>
</reference>
<reference key="2">
    <citation type="journal article" date="1990" name="J. Bacteriol.">
        <title>Biochemical characterization of avirulent exoC mutants of Agrobacterium tumefaciens.</title>
        <authorList>
            <person name="Uttaro A.D."/>
            <person name="Cangelosi G.A."/>
            <person name="Geremia R.A."/>
            <person name="Nester E.W."/>
            <person name="Ugalde R.A."/>
        </authorList>
    </citation>
    <scope>CHARACTERIZATION</scope>
</reference>
<comment type="function">
    <text>This enzyme participates in both the breakdown and synthesis of glucose. Required for the synthesis of capsular polysaccharide and normal lipopolysaccharide.</text>
</comment>
<comment type="catalytic activity">
    <reaction>
        <text>alpha-D-glucose 1-phosphate = alpha-D-glucose 6-phosphate</text>
        <dbReference type="Rhea" id="RHEA:23536"/>
        <dbReference type="ChEBI" id="CHEBI:58225"/>
        <dbReference type="ChEBI" id="CHEBI:58601"/>
        <dbReference type="EC" id="5.4.2.2"/>
    </reaction>
</comment>
<comment type="cofactor">
    <cofactor evidence="1">
        <name>Mg(2+)</name>
        <dbReference type="ChEBI" id="CHEBI:18420"/>
    </cofactor>
    <text evidence="1">Binds 1 Mg(2+) ion per subunit.</text>
</comment>
<comment type="similarity">
    <text evidence="3">Belongs to the phosphohexose mutase family.</text>
</comment>
<organism>
    <name type="scientific">Rhizobium radiobacter</name>
    <name type="common">Agrobacterium tumefaciens</name>
    <name type="synonym">Agrobacterium radiobacter</name>
    <dbReference type="NCBI Taxonomy" id="358"/>
    <lineage>
        <taxon>Bacteria</taxon>
        <taxon>Pseudomonadati</taxon>
        <taxon>Pseudomonadota</taxon>
        <taxon>Alphaproteobacteria</taxon>
        <taxon>Hyphomicrobiales</taxon>
        <taxon>Rhizobiaceae</taxon>
        <taxon>Rhizobium/Agrobacterium group</taxon>
        <taxon>Agrobacterium</taxon>
        <taxon>Agrobacterium tumefaciens complex</taxon>
    </lineage>
</organism>
<gene>
    <name type="primary">pgm</name>
    <name type="synonym">exoC</name>
    <name type="synonym">pscA</name>
</gene>
<accession>P39671</accession>
<name>PGM_RHIRD</name>